<gene>
    <name type="primary">ppzC</name>
</gene>
<protein>
    <recommendedName>
        <fullName evidence="6">2-oxoglutarate-Fe(II) type oxidoreductase ppzC</fullName>
        <ecNumber evidence="5">1.14.11.-</ecNumber>
    </recommendedName>
    <alternativeName>
        <fullName evidence="6">Pyrrolopyrazine biosynthesis cluster protein C</fullName>
    </alternativeName>
</protein>
<proteinExistence type="evidence at protein level"/>
<sequence>MATDTAVTGAPETMQLRLASGNGPVTRTVLRTPLRDALPSEVPLIDISPIFSTSVADRKAVACKIHDAATNIGFFYIQNHRVPSRDTDMAYSASLDFFRQDMEAKMKADAKKGPFDSGYRGPGTQRVNPDEGADLRETYSILYDPMLDPTVPDPARIPEPASRFLHLGRAPFESTDTLPHFKDAFVRYFQACLALARALTRTFALSLDLPESAFDSKVQYPDASLEINFYPPISTGHAVSAPADPDTRVSIGSHTDFLLFTILWQDSNGGLQVLNREGQWIRASPVEGTFVVNIGDYLQRITNDKYVSTVHRAQNWSGRQRVSMPFFWGFGMHESCQVLESCCGEDGKSKYDEVRCVDWVSRRLGNLFDLSDKG</sequence>
<evidence type="ECO:0000250" key="1">
    <source>
        <dbReference type="UniProtKB" id="Q4H424"/>
    </source>
</evidence>
<evidence type="ECO:0000255" key="2">
    <source>
        <dbReference type="PROSITE-ProRule" id="PRU00805"/>
    </source>
</evidence>
<evidence type="ECO:0000256" key="3">
    <source>
        <dbReference type="SAM" id="MobiDB-lite"/>
    </source>
</evidence>
<evidence type="ECO:0000269" key="4">
    <source>
    </source>
</evidence>
<evidence type="ECO:0000269" key="5">
    <source>
    </source>
</evidence>
<evidence type="ECO:0000303" key="6">
    <source>
    </source>
</evidence>
<evidence type="ECO:0000305" key="7"/>
<feature type="chain" id="PRO_0000461612" description="2-oxoglutarate-Fe(II) type oxidoreductase ppzC">
    <location>
        <begin position="1"/>
        <end position="374"/>
    </location>
</feature>
<feature type="domain" description="Fe2OG dioxygenase" evidence="2">
    <location>
        <begin position="220"/>
        <end position="330"/>
    </location>
</feature>
<feature type="region of interest" description="Disordered" evidence="3">
    <location>
        <begin position="111"/>
        <end position="131"/>
    </location>
</feature>
<feature type="binding site" evidence="2">
    <location>
        <position position="254"/>
    </location>
    <ligand>
        <name>Fe cation</name>
        <dbReference type="ChEBI" id="CHEBI:24875"/>
    </ligand>
</feature>
<feature type="binding site" evidence="2">
    <location>
        <position position="256"/>
    </location>
    <ligand>
        <name>Fe cation</name>
        <dbReference type="ChEBI" id="CHEBI:24875"/>
    </ligand>
</feature>
<feature type="binding site" evidence="2">
    <location>
        <position position="311"/>
    </location>
    <ligand>
        <name>Fe cation</name>
        <dbReference type="ChEBI" id="CHEBI:24875"/>
    </ligand>
</feature>
<feature type="binding site" evidence="2">
    <location>
        <position position="321"/>
    </location>
    <ligand>
        <name>2-oxoglutarate</name>
        <dbReference type="ChEBI" id="CHEBI:16810"/>
    </ligand>
</feature>
<dbReference type="EC" id="1.14.11.-" evidence="5"/>
<dbReference type="EMBL" id="BK010672">
    <property type="protein sequence ID" value="DAC76718.1"/>
    <property type="molecule type" value="Genomic_DNA"/>
</dbReference>
<dbReference type="GO" id="GO:0051213">
    <property type="term" value="F:dioxygenase activity"/>
    <property type="evidence" value="ECO:0007669"/>
    <property type="project" value="UniProtKB-KW"/>
</dbReference>
<dbReference type="GO" id="GO:0046872">
    <property type="term" value="F:metal ion binding"/>
    <property type="evidence" value="ECO:0007669"/>
    <property type="project" value="UniProtKB-KW"/>
</dbReference>
<dbReference type="GO" id="GO:0044283">
    <property type="term" value="P:small molecule biosynthetic process"/>
    <property type="evidence" value="ECO:0007669"/>
    <property type="project" value="UniProtKB-ARBA"/>
</dbReference>
<dbReference type="Gene3D" id="2.60.120.330">
    <property type="entry name" value="B-lactam Antibiotic, Isopenicillin N Synthase, Chain"/>
    <property type="match status" value="1"/>
</dbReference>
<dbReference type="InterPro" id="IPR026992">
    <property type="entry name" value="DIOX_N"/>
</dbReference>
<dbReference type="InterPro" id="IPR044861">
    <property type="entry name" value="IPNS-like_FE2OG_OXY"/>
</dbReference>
<dbReference type="InterPro" id="IPR027443">
    <property type="entry name" value="IPNS-like_sf"/>
</dbReference>
<dbReference type="InterPro" id="IPR050231">
    <property type="entry name" value="Iron_ascorbate_oxido_reductase"/>
</dbReference>
<dbReference type="InterPro" id="IPR005123">
    <property type="entry name" value="Oxoglu/Fe-dep_dioxygenase_dom"/>
</dbReference>
<dbReference type="PANTHER" id="PTHR47990">
    <property type="entry name" value="2-OXOGLUTARATE (2OG) AND FE(II)-DEPENDENT OXYGENASE SUPERFAMILY PROTEIN-RELATED"/>
    <property type="match status" value="1"/>
</dbReference>
<dbReference type="Pfam" id="PF03171">
    <property type="entry name" value="2OG-FeII_Oxy"/>
    <property type="match status" value="1"/>
</dbReference>
<dbReference type="Pfam" id="PF14226">
    <property type="entry name" value="DIOX_N"/>
    <property type="match status" value="1"/>
</dbReference>
<dbReference type="PRINTS" id="PR00682">
    <property type="entry name" value="IPNSYNTHASE"/>
</dbReference>
<dbReference type="SUPFAM" id="SSF51197">
    <property type="entry name" value="Clavaminate synthase-like"/>
    <property type="match status" value="1"/>
</dbReference>
<dbReference type="PROSITE" id="PS51471">
    <property type="entry name" value="FE2OG_OXY"/>
    <property type="match status" value="1"/>
</dbReference>
<accession>A0A455ZKR7</accession>
<organism>
    <name type="scientific">Metarhizium majus (strain ARSEF 297)</name>
    <dbReference type="NCBI Taxonomy" id="1276143"/>
    <lineage>
        <taxon>Eukaryota</taxon>
        <taxon>Fungi</taxon>
        <taxon>Dikarya</taxon>
        <taxon>Ascomycota</taxon>
        <taxon>Pezizomycotina</taxon>
        <taxon>Sordariomycetes</taxon>
        <taxon>Hypocreomycetidae</taxon>
        <taxon>Hypocreales</taxon>
        <taxon>Clavicipitaceae</taxon>
        <taxon>Metarhizium</taxon>
        <taxon>Metarhizium majus</taxon>
    </lineage>
</organism>
<keyword id="KW-0223">Dioxygenase</keyword>
<keyword id="KW-0408">Iron</keyword>
<keyword id="KW-0479">Metal-binding</keyword>
<keyword id="KW-0560">Oxidoreductase</keyword>
<comment type="function">
    <text evidence="1 4 5">2-oxoglutarate-Fe(II) type oxidoreductase; part of the gene cluster that mediates the biosynthesis of pyrrolopyrazines, secondary metabolites showing insecticidal activity (PubMed:30452111, PubMed:38578094). Within the pathway, ppzC uses peramine as substrate for hydroxylation to yield the novel analog 8-hydroxyperamine (PubMed:38578094). The single multifunctional NRPS ppzA is sufficient to produce peramine via condensation of 1-pyrroline-5-carboxylate and arginine, N-methylation of the alpha-amino group of arginine and reduction of the thioester and the cyclization to form an iminium ion resulting in release from the peptide synthetase. Deprotonation of this intermediate and oxidation of the pyrroline ring would give rise to peramine (By similarity). In Epichloe species that produce only peramine, the peramine synthetase gene is not localized in a gene cluster, in contrast to Metarhizium species that contain additional pyrrolopyrazine biosynthesis genes. The 2-oxoglutarate-Fe(II) type oxidoreductase ppzC hydroxylates peramine to yield the newly identified compound 8-hydroxyperamine whereas ppzD converts L-proline into trans-4-hydroxy-L-proline, a precursor of peramine biosynthesis (PubMed:38578094).</text>
</comment>
<comment type="catalytic activity">
    <reaction evidence="5">
        <text>peramine + 2-oxoglutarate + O2 = 8-hydroxyperamine + succinate + CO2</text>
        <dbReference type="Rhea" id="RHEA:82167"/>
        <dbReference type="ChEBI" id="CHEBI:15379"/>
        <dbReference type="ChEBI" id="CHEBI:16526"/>
        <dbReference type="ChEBI" id="CHEBI:16810"/>
        <dbReference type="ChEBI" id="CHEBI:30031"/>
        <dbReference type="ChEBI" id="CHEBI:232088"/>
        <dbReference type="ChEBI" id="CHEBI:232097"/>
    </reaction>
    <physiologicalReaction direction="left-to-right" evidence="5">
        <dbReference type="Rhea" id="RHEA:82168"/>
    </physiologicalReaction>
</comment>
<comment type="cofactor">
    <cofactor evidence="2">
        <name>Fe(2+)</name>
        <dbReference type="ChEBI" id="CHEBI:29033"/>
    </cofactor>
    <text evidence="2">Binds 1 Fe(2+) ion per subunit.</text>
</comment>
<comment type="pathway">
    <text evidence="5">Secondary metabolite biosynthesis.</text>
</comment>
<comment type="similarity">
    <text evidence="7">Belongs to the iron/ascorbate-dependent oxidoreductase family.</text>
</comment>
<name>PPZC_METMF</name>
<reference key="1">
    <citation type="journal article" date="2019" name="Environ. Microbiol.">
        <title>Orthologous peramine and pyrrolopyrazine-producing biosynthetic gene clusters in Metarhizium rileyi, Metarhizium majus and Cladonia grayi.</title>
        <authorList>
            <person name="Berry D."/>
            <person name="Mace W."/>
            <person name="Rehner S.A."/>
            <person name="Grage K."/>
            <person name="Dijkwel P.P."/>
            <person name="Young C.A."/>
            <person name="Scott B."/>
        </authorList>
    </citation>
    <scope>NUCLEOTIDE SEQUENCE [GENOMIC DNA]</scope>
    <scope>FUNCTION</scope>
    <scope>PATHWAY</scope>
    <source>
        <strain>ARSEF 297</strain>
    </source>
</reference>
<reference key="2">
    <citation type="journal article" date="2024" name="J. Am. Chem. Soc.">
        <title>Two Iron(II), alpha-Ketoglutarate-Dependent Enzymes Encoded by the PPZ Gene Cluster of Metarhizium majus Enable Production of 8-Hydroxyperamine.</title>
        <authorList>
            <person name="Rothchild K.W."/>
            <person name="Hagar M."/>
            <person name="Berry D."/>
            <person name="Ryan K.S."/>
        </authorList>
    </citation>
    <scope>FUNCTION</scope>
    <scope>CATALYTIC ACTIVITY</scope>
    <scope>PATHWAY</scope>
</reference>